<organism>
    <name type="scientific">Escherichia coli (strain UTI89 / UPEC)</name>
    <dbReference type="NCBI Taxonomy" id="364106"/>
    <lineage>
        <taxon>Bacteria</taxon>
        <taxon>Pseudomonadati</taxon>
        <taxon>Pseudomonadota</taxon>
        <taxon>Gammaproteobacteria</taxon>
        <taxon>Enterobacterales</taxon>
        <taxon>Enterobacteriaceae</taxon>
        <taxon>Escherichia</taxon>
    </lineage>
</organism>
<sequence length="291" mass="33108">MTSSYLHFPEFDPVIFSIGPVALHWYGLMYLVGFIFAMWLATRRANRPGSGWTKNEVENLLYAGFLGVFLGGRIGYVLFYNFPQFMADPLYLFRVWDGGMSFHGGLIGVIVVMIIFARRTKRSFFQVSDFIAPLIPFGLGAGRLGNFINGELWGRVDPNFPFAMLFPGSRTEDILLLQTNPQWQSIFDTYGVLPRHPSQLYELLLEGVVLFIILNLYIRKPRPMGAVSGLFLIGYGAFRIIVEFFRQPDAQFTGAWVQYISMGQILSIPMIVAGVIMMVWAYRRSPQQHVS</sequence>
<dbReference type="EC" id="2.5.1.145" evidence="1"/>
<dbReference type="EMBL" id="CP000243">
    <property type="protein sequence ID" value="ABE08679.1"/>
    <property type="molecule type" value="Genomic_DNA"/>
</dbReference>
<dbReference type="RefSeq" id="WP_000204658.1">
    <property type="nucleotide sequence ID" value="NZ_CP064825.1"/>
</dbReference>
<dbReference type="SMR" id="Q1R7I5"/>
<dbReference type="GeneID" id="93779170"/>
<dbReference type="KEGG" id="eci:UTI89_C3230"/>
<dbReference type="HOGENOM" id="CLU_013386_1_0_6"/>
<dbReference type="UniPathway" id="UPA00664"/>
<dbReference type="Proteomes" id="UP000001952">
    <property type="component" value="Chromosome"/>
</dbReference>
<dbReference type="GO" id="GO:0005886">
    <property type="term" value="C:plasma membrane"/>
    <property type="evidence" value="ECO:0007669"/>
    <property type="project" value="UniProtKB-SubCell"/>
</dbReference>
<dbReference type="GO" id="GO:0008961">
    <property type="term" value="F:phosphatidylglycerol-prolipoprotein diacylglyceryl transferase activity"/>
    <property type="evidence" value="ECO:0007669"/>
    <property type="project" value="UniProtKB-UniRule"/>
</dbReference>
<dbReference type="GO" id="GO:0042158">
    <property type="term" value="P:lipoprotein biosynthetic process"/>
    <property type="evidence" value="ECO:0007669"/>
    <property type="project" value="UniProtKB-UniRule"/>
</dbReference>
<dbReference type="HAMAP" id="MF_01147">
    <property type="entry name" value="Lgt"/>
    <property type="match status" value="1"/>
</dbReference>
<dbReference type="InterPro" id="IPR001640">
    <property type="entry name" value="Lgt"/>
</dbReference>
<dbReference type="NCBIfam" id="TIGR00544">
    <property type="entry name" value="lgt"/>
    <property type="match status" value="1"/>
</dbReference>
<dbReference type="PANTHER" id="PTHR30589:SF0">
    <property type="entry name" value="PHOSPHATIDYLGLYCEROL--PROLIPOPROTEIN DIACYLGLYCERYL TRANSFERASE"/>
    <property type="match status" value="1"/>
</dbReference>
<dbReference type="PANTHER" id="PTHR30589">
    <property type="entry name" value="PROLIPOPROTEIN DIACYLGLYCERYL TRANSFERASE"/>
    <property type="match status" value="1"/>
</dbReference>
<dbReference type="Pfam" id="PF01790">
    <property type="entry name" value="LGT"/>
    <property type="match status" value="1"/>
</dbReference>
<dbReference type="PROSITE" id="PS01311">
    <property type="entry name" value="LGT"/>
    <property type="match status" value="1"/>
</dbReference>
<proteinExistence type="inferred from homology"/>
<evidence type="ECO:0000255" key="1">
    <source>
        <dbReference type="HAMAP-Rule" id="MF_01147"/>
    </source>
</evidence>
<gene>
    <name evidence="1" type="primary">lgt</name>
    <name type="ordered locus">UTI89_C3230</name>
</gene>
<accession>Q1R7I5</accession>
<reference key="1">
    <citation type="journal article" date="2006" name="Proc. Natl. Acad. Sci. U.S.A.">
        <title>Identification of genes subject to positive selection in uropathogenic strains of Escherichia coli: a comparative genomics approach.</title>
        <authorList>
            <person name="Chen S.L."/>
            <person name="Hung C.-S."/>
            <person name="Xu J."/>
            <person name="Reigstad C.S."/>
            <person name="Magrini V."/>
            <person name="Sabo A."/>
            <person name="Blasiar D."/>
            <person name="Bieri T."/>
            <person name="Meyer R.R."/>
            <person name="Ozersky P."/>
            <person name="Armstrong J.R."/>
            <person name="Fulton R.S."/>
            <person name="Latreille J.P."/>
            <person name="Spieth J."/>
            <person name="Hooton T.M."/>
            <person name="Mardis E.R."/>
            <person name="Hultgren S.J."/>
            <person name="Gordon J.I."/>
        </authorList>
    </citation>
    <scope>NUCLEOTIDE SEQUENCE [LARGE SCALE GENOMIC DNA]</scope>
    <source>
        <strain>UTI89 / UPEC</strain>
    </source>
</reference>
<name>LGT_ECOUT</name>
<protein>
    <recommendedName>
        <fullName evidence="1">Phosphatidylglycerol--prolipoprotein diacylglyceryl transferase</fullName>
        <ecNumber evidence="1">2.5.1.145</ecNumber>
    </recommendedName>
</protein>
<feature type="chain" id="PRO_1000053426" description="Phosphatidylglycerol--prolipoprotein diacylglyceryl transferase">
    <location>
        <begin position="1"/>
        <end position="291"/>
    </location>
</feature>
<feature type="transmembrane region" description="Helical" evidence="1">
    <location>
        <begin position="21"/>
        <end position="41"/>
    </location>
</feature>
<feature type="transmembrane region" description="Helical" evidence="1">
    <location>
        <begin position="60"/>
        <end position="80"/>
    </location>
</feature>
<feature type="transmembrane region" description="Helical" evidence="1">
    <location>
        <begin position="96"/>
        <end position="116"/>
    </location>
</feature>
<feature type="transmembrane region" description="Helical" evidence="1">
    <location>
        <begin position="225"/>
        <end position="245"/>
    </location>
</feature>
<feature type="transmembrane region" description="Helical" evidence="1">
    <location>
        <begin position="260"/>
        <end position="280"/>
    </location>
</feature>
<feature type="binding site" evidence="1">
    <location>
        <position position="143"/>
    </location>
    <ligand>
        <name>a 1,2-diacyl-sn-glycero-3-phospho-(1'-sn-glycerol)</name>
        <dbReference type="ChEBI" id="CHEBI:64716"/>
    </ligand>
</feature>
<keyword id="KW-0997">Cell inner membrane</keyword>
<keyword id="KW-1003">Cell membrane</keyword>
<keyword id="KW-0472">Membrane</keyword>
<keyword id="KW-0808">Transferase</keyword>
<keyword id="KW-0812">Transmembrane</keyword>
<keyword id="KW-1133">Transmembrane helix</keyword>
<comment type="function">
    <text evidence="1">Catalyzes the transfer of the diacylglyceryl group from phosphatidylglycerol to the sulfhydryl group of the N-terminal cysteine of a prolipoprotein, the first step in the formation of mature lipoproteins.</text>
</comment>
<comment type="catalytic activity">
    <reaction evidence="1">
        <text>L-cysteinyl-[prolipoprotein] + a 1,2-diacyl-sn-glycero-3-phospho-(1'-sn-glycerol) = an S-1,2-diacyl-sn-glyceryl-L-cysteinyl-[prolipoprotein] + sn-glycerol 1-phosphate + H(+)</text>
        <dbReference type="Rhea" id="RHEA:56712"/>
        <dbReference type="Rhea" id="RHEA-COMP:14679"/>
        <dbReference type="Rhea" id="RHEA-COMP:14680"/>
        <dbReference type="ChEBI" id="CHEBI:15378"/>
        <dbReference type="ChEBI" id="CHEBI:29950"/>
        <dbReference type="ChEBI" id="CHEBI:57685"/>
        <dbReference type="ChEBI" id="CHEBI:64716"/>
        <dbReference type="ChEBI" id="CHEBI:140658"/>
        <dbReference type="EC" id="2.5.1.145"/>
    </reaction>
</comment>
<comment type="pathway">
    <text evidence="1">Protein modification; lipoprotein biosynthesis (diacylglyceryl transfer).</text>
</comment>
<comment type="subcellular location">
    <subcellularLocation>
        <location evidence="1">Cell inner membrane</location>
        <topology evidence="1">Multi-pass membrane protein</topology>
    </subcellularLocation>
</comment>
<comment type="similarity">
    <text evidence="1">Belongs to the Lgt family.</text>
</comment>